<name>MATK_CAMSS</name>
<comment type="function">
    <text evidence="1">Usually encoded in the trnK tRNA gene intron. Probably assists in splicing its own and other chloroplast group II introns.</text>
</comment>
<comment type="subcellular location">
    <subcellularLocation>
        <location>Plastid</location>
        <location>Chloroplast</location>
    </subcellularLocation>
</comment>
<comment type="similarity">
    <text evidence="1">Belongs to the intron maturase 2 family. MatK subfamily.</text>
</comment>
<organism>
    <name type="scientific">Camellia sasanqua</name>
    <name type="common">Christmas camellia</name>
    <dbReference type="NCBI Taxonomy" id="182300"/>
    <lineage>
        <taxon>Eukaryota</taxon>
        <taxon>Viridiplantae</taxon>
        <taxon>Streptophyta</taxon>
        <taxon>Embryophyta</taxon>
        <taxon>Tracheophyta</taxon>
        <taxon>Spermatophyta</taxon>
        <taxon>Magnoliopsida</taxon>
        <taxon>eudicotyledons</taxon>
        <taxon>Gunneridae</taxon>
        <taxon>Pentapetalae</taxon>
        <taxon>asterids</taxon>
        <taxon>Ericales</taxon>
        <taxon>Theaceae</taxon>
        <taxon>Camellia</taxon>
    </lineage>
</organism>
<sequence length="499" mass="59269">MEEFKRYLELDRSQQHDFVYPLIFQEYIYALAHDHGLTRSIFLENIGYDNKFSLLIVKHLITQMYQQNHFLFSANDSNQNLFFGHNTNLYSQMILEGFVAVVEIPFSLFSLEGKEIVKSQNLRSIHSIFPFLEDKFSHLNYVLDILIPHSIHLEISVQTLRYWVKDASSLYLLRFFLHMYWNWNSLITPKKSSFDFSKRNQRLFLFLYNFHICEYESIFVFLRKQSSHLRSISSGTFLERRYFYGKIEHFLEVFTKDFQVILWLFKDPFIHYVRYQGKYILASKGTSLLMNKWKSYLVNFWQCYFYMWSQPGRIHINQLSKHSPDFLGYLSSVRLNPSMVRSQMLENSFLIGNAIKKFDTIVPIIPMIGSLSKAKFCNVLGHPISKPVWADLSDSDIIDRFGRIYRNLSHYHSGSSKKTSLYRIKYIXXXXXXXTLARKHKITVRAFLKRLGSELLEEFFTGEEQVFSLTFPSSTSQGLYRRRIWYLDIVCINDLASHE</sequence>
<feature type="chain" id="PRO_0000143303" description="Maturase K">
    <location>
        <begin position="1"/>
        <end position="499"/>
    </location>
</feature>
<proteinExistence type="inferred from homology"/>
<evidence type="ECO:0000255" key="1">
    <source>
        <dbReference type="HAMAP-Rule" id="MF_01390"/>
    </source>
</evidence>
<protein>
    <recommendedName>
        <fullName evidence="1">Maturase K</fullName>
    </recommendedName>
    <alternativeName>
        <fullName evidence="1">Intron maturase</fullName>
    </alternativeName>
</protein>
<accession>Q8WIV8</accession>
<gene>
    <name evidence="1" type="primary">matK</name>
</gene>
<reference key="1">
    <citation type="journal article" date="2001" name="Am. J. Bot.">
        <title>Phylogenetic relationships of Theaceae inferred from chloroplast DNA sequence data.</title>
        <authorList>
            <person name="Prince L.M."/>
            <person name="Parks C.R."/>
        </authorList>
    </citation>
    <scope>NUCLEOTIDE SEQUENCE [GENOMIC DNA]</scope>
    <source>
        <tissue>Leaf</tissue>
    </source>
</reference>
<geneLocation type="chloroplast"/>
<dbReference type="EMBL" id="AF380076">
    <property type="protein sequence ID" value="AAL60372.1"/>
    <property type="molecule type" value="Genomic_DNA"/>
</dbReference>
<dbReference type="GO" id="GO:0009507">
    <property type="term" value="C:chloroplast"/>
    <property type="evidence" value="ECO:0007669"/>
    <property type="project" value="UniProtKB-SubCell"/>
</dbReference>
<dbReference type="GO" id="GO:0003723">
    <property type="term" value="F:RNA binding"/>
    <property type="evidence" value="ECO:0007669"/>
    <property type="project" value="UniProtKB-KW"/>
</dbReference>
<dbReference type="GO" id="GO:0006397">
    <property type="term" value="P:mRNA processing"/>
    <property type="evidence" value="ECO:0007669"/>
    <property type="project" value="UniProtKB-KW"/>
</dbReference>
<dbReference type="GO" id="GO:0008380">
    <property type="term" value="P:RNA splicing"/>
    <property type="evidence" value="ECO:0007669"/>
    <property type="project" value="UniProtKB-UniRule"/>
</dbReference>
<dbReference type="GO" id="GO:0008033">
    <property type="term" value="P:tRNA processing"/>
    <property type="evidence" value="ECO:0007669"/>
    <property type="project" value="UniProtKB-KW"/>
</dbReference>
<dbReference type="HAMAP" id="MF_01390">
    <property type="entry name" value="MatK"/>
    <property type="match status" value="1"/>
</dbReference>
<dbReference type="InterPro" id="IPR024937">
    <property type="entry name" value="Domain_X"/>
</dbReference>
<dbReference type="InterPro" id="IPR002866">
    <property type="entry name" value="Maturase_MatK"/>
</dbReference>
<dbReference type="InterPro" id="IPR024942">
    <property type="entry name" value="Maturase_MatK_N"/>
</dbReference>
<dbReference type="PANTHER" id="PTHR34811">
    <property type="entry name" value="MATURASE K"/>
    <property type="match status" value="1"/>
</dbReference>
<dbReference type="PANTHER" id="PTHR34811:SF1">
    <property type="entry name" value="MATURASE K"/>
    <property type="match status" value="1"/>
</dbReference>
<dbReference type="Pfam" id="PF01348">
    <property type="entry name" value="Intron_maturas2"/>
    <property type="match status" value="1"/>
</dbReference>
<dbReference type="Pfam" id="PF01824">
    <property type="entry name" value="MatK_N"/>
    <property type="match status" value="1"/>
</dbReference>
<keyword id="KW-0150">Chloroplast</keyword>
<keyword id="KW-0507">mRNA processing</keyword>
<keyword id="KW-0934">Plastid</keyword>
<keyword id="KW-0694">RNA-binding</keyword>
<keyword id="KW-0819">tRNA processing</keyword>